<reference key="1">
    <citation type="journal article" date="2003" name="Genome Res.">
        <title>The secreted protein discovery initiative (SPDI), a large-scale effort to identify novel human secreted and transmembrane proteins: a bioinformatics assessment.</title>
        <authorList>
            <person name="Clark H.F."/>
            <person name="Gurney A.L."/>
            <person name="Abaya E."/>
            <person name="Baker K."/>
            <person name="Baldwin D.T."/>
            <person name="Brush J."/>
            <person name="Chen J."/>
            <person name="Chow B."/>
            <person name="Chui C."/>
            <person name="Crowley C."/>
            <person name="Currell B."/>
            <person name="Deuel B."/>
            <person name="Dowd P."/>
            <person name="Eaton D."/>
            <person name="Foster J.S."/>
            <person name="Grimaldi C."/>
            <person name="Gu Q."/>
            <person name="Hass P.E."/>
            <person name="Heldens S."/>
            <person name="Huang A."/>
            <person name="Kim H.S."/>
            <person name="Klimowski L."/>
            <person name="Jin Y."/>
            <person name="Johnson S."/>
            <person name="Lee J."/>
            <person name="Lewis L."/>
            <person name="Liao D."/>
            <person name="Mark M.R."/>
            <person name="Robbie E."/>
            <person name="Sanchez C."/>
            <person name="Schoenfeld J."/>
            <person name="Seshagiri S."/>
            <person name="Simmons L."/>
            <person name="Singh J."/>
            <person name="Smith V."/>
            <person name="Stinson J."/>
            <person name="Vagts A."/>
            <person name="Vandlen R.L."/>
            <person name="Watanabe C."/>
            <person name="Wieand D."/>
            <person name="Woods K."/>
            <person name="Xie M.-H."/>
            <person name="Yansura D.G."/>
            <person name="Yi S."/>
            <person name="Yu G."/>
            <person name="Yuan J."/>
            <person name="Zhang M."/>
            <person name="Zhang Z."/>
            <person name="Goddard A.D."/>
            <person name="Wood W.I."/>
            <person name="Godowski P.J."/>
            <person name="Gray A.M."/>
        </authorList>
    </citation>
    <scope>NUCLEOTIDE SEQUENCE [LARGE SCALE MRNA]</scope>
</reference>
<sequence>MLPEQGPQPSTMPLWCLLAACTSLPRQAATMLEEAASPNEAVHASTSGSGALTDQTFTDLSAAEASSEEVPDFMEVPHSVHHKINCFFYLEKQLCQLPSPLCLSSLLTLKLKTTVPAPGRWWSFQPHKAFPLLVGTPGSWQSTIDPAWAAPSQPSPG</sequence>
<evidence type="ECO:0000255" key="1"/>
<evidence type="ECO:0000305" key="2"/>
<organism>
    <name type="scientific">Homo sapiens</name>
    <name type="common">Human</name>
    <dbReference type="NCBI Taxonomy" id="9606"/>
    <lineage>
        <taxon>Eukaryota</taxon>
        <taxon>Metazoa</taxon>
        <taxon>Chordata</taxon>
        <taxon>Craniata</taxon>
        <taxon>Vertebrata</taxon>
        <taxon>Euteleostomi</taxon>
        <taxon>Mammalia</taxon>
        <taxon>Eutheria</taxon>
        <taxon>Euarchontoglires</taxon>
        <taxon>Primates</taxon>
        <taxon>Haplorrhini</taxon>
        <taxon>Catarrhini</taxon>
        <taxon>Hominidae</taxon>
        <taxon>Homo</taxon>
    </lineage>
</organism>
<comment type="subcellular location">
    <subcellularLocation>
        <location evidence="2">Secreted</location>
    </subcellularLocation>
</comment>
<feature type="signal peptide" evidence="1">
    <location>
        <begin position="1"/>
        <end position="30"/>
    </location>
</feature>
<feature type="chain" id="PRO_0000253461" description="Uncharacterized protein UNQ6126/PRO20091">
    <location>
        <begin position="31"/>
        <end position="157"/>
    </location>
</feature>
<dbReference type="EMBL" id="AY358194">
    <property type="protein sequence ID" value="AAQ88561.1"/>
    <property type="molecule type" value="mRNA"/>
</dbReference>
<dbReference type="BioMuta" id="UNQ6126/PRO20091"/>
<dbReference type="PaxDb" id="9606-ENSP00000485227"/>
<dbReference type="UCSC" id="uc062fgq.1">
    <property type="organism name" value="human"/>
</dbReference>
<dbReference type="neXtProt" id="NX_Q6UXV3"/>
<dbReference type="eggNOG" id="ENOG502TEPK">
    <property type="taxonomic scope" value="Eukaryota"/>
</dbReference>
<dbReference type="HOGENOM" id="CLU_1677265_0_0_1"/>
<dbReference type="InParanoid" id="Q6UXV3"/>
<dbReference type="PAN-GO" id="Q6UXV3">
    <property type="GO annotations" value="0 GO annotations based on evolutionary models"/>
</dbReference>
<dbReference type="PhylomeDB" id="Q6UXV3"/>
<dbReference type="Pharos" id="Q6UXV3">
    <property type="development level" value="Tdark"/>
</dbReference>
<dbReference type="Proteomes" id="UP000005640">
    <property type="component" value="Unplaced"/>
</dbReference>
<dbReference type="RNAct" id="Q6UXV3">
    <property type="molecule type" value="protein"/>
</dbReference>
<dbReference type="GO" id="GO:0005576">
    <property type="term" value="C:extracellular region"/>
    <property type="evidence" value="ECO:0007669"/>
    <property type="project" value="UniProtKB-SubCell"/>
</dbReference>
<proteinExistence type="evidence at transcript level"/>
<accession>Q6UXV3</accession>
<keyword id="KW-1185">Reference proteome</keyword>
<keyword id="KW-0964">Secreted</keyword>
<keyword id="KW-0732">Signal</keyword>
<gene>
    <name type="ORF">UNQ6126/PRO20091</name>
</gene>
<name>YV010_HUMAN</name>
<protein>
    <recommendedName>
        <fullName>Uncharacterized protein UNQ6126/PRO20091</fullName>
    </recommendedName>
</protein>